<gene>
    <name evidence="1" type="primary">smpB</name>
    <name type="ordered locus">Xfasm12_1520</name>
</gene>
<comment type="function">
    <text evidence="1">Required for rescue of stalled ribosomes mediated by trans-translation. Binds to transfer-messenger RNA (tmRNA), required for stable association of tmRNA with ribosomes. tmRNA and SmpB together mimic tRNA shape, replacing the anticodon stem-loop with SmpB. tmRNA is encoded by the ssrA gene; the 2 termini fold to resemble tRNA(Ala) and it encodes a 'tag peptide', a short internal open reading frame. During trans-translation Ala-aminoacylated tmRNA acts like a tRNA, entering the A-site of stalled ribosomes, displacing the stalled mRNA. The ribosome then switches to translate the ORF on the tmRNA; the nascent peptide is terminated with the 'tag peptide' encoded by the tmRNA and targeted for degradation. The ribosome is freed to recommence translation, which seems to be the essential function of trans-translation.</text>
</comment>
<comment type="subcellular location">
    <subcellularLocation>
        <location evidence="1">Cytoplasm</location>
    </subcellularLocation>
    <text evidence="1">The tmRNA-SmpB complex associates with stalled 70S ribosomes.</text>
</comment>
<comment type="similarity">
    <text evidence="1">Belongs to the SmpB family.</text>
</comment>
<organism>
    <name type="scientific">Xylella fastidiosa (strain M12)</name>
    <dbReference type="NCBI Taxonomy" id="405440"/>
    <lineage>
        <taxon>Bacteria</taxon>
        <taxon>Pseudomonadati</taxon>
        <taxon>Pseudomonadota</taxon>
        <taxon>Gammaproteobacteria</taxon>
        <taxon>Lysobacterales</taxon>
        <taxon>Lysobacteraceae</taxon>
        <taxon>Xylella</taxon>
    </lineage>
</organism>
<dbReference type="EMBL" id="CP000941">
    <property type="protein sequence ID" value="ACA12435.1"/>
    <property type="molecule type" value="Genomic_DNA"/>
</dbReference>
<dbReference type="RefSeq" id="WP_004085836.1">
    <property type="nucleotide sequence ID" value="NC_010513.1"/>
</dbReference>
<dbReference type="SMR" id="B0U3K6"/>
<dbReference type="KEGG" id="xfm:Xfasm12_1520"/>
<dbReference type="HOGENOM" id="CLU_108953_3_0_6"/>
<dbReference type="GO" id="GO:0005829">
    <property type="term" value="C:cytosol"/>
    <property type="evidence" value="ECO:0007669"/>
    <property type="project" value="TreeGrafter"/>
</dbReference>
<dbReference type="GO" id="GO:0003723">
    <property type="term" value="F:RNA binding"/>
    <property type="evidence" value="ECO:0007669"/>
    <property type="project" value="UniProtKB-UniRule"/>
</dbReference>
<dbReference type="GO" id="GO:0070929">
    <property type="term" value="P:trans-translation"/>
    <property type="evidence" value="ECO:0007669"/>
    <property type="project" value="UniProtKB-UniRule"/>
</dbReference>
<dbReference type="CDD" id="cd09294">
    <property type="entry name" value="SmpB"/>
    <property type="match status" value="1"/>
</dbReference>
<dbReference type="Gene3D" id="2.40.280.10">
    <property type="match status" value="1"/>
</dbReference>
<dbReference type="HAMAP" id="MF_00023">
    <property type="entry name" value="SmpB"/>
    <property type="match status" value="1"/>
</dbReference>
<dbReference type="InterPro" id="IPR023620">
    <property type="entry name" value="SmpB"/>
</dbReference>
<dbReference type="InterPro" id="IPR000037">
    <property type="entry name" value="SsrA-bd_prot"/>
</dbReference>
<dbReference type="InterPro" id="IPR020081">
    <property type="entry name" value="SsrA-bd_prot_CS"/>
</dbReference>
<dbReference type="NCBIfam" id="NF003843">
    <property type="entry name" value="PRK05422.1"/>
    <property type="match status" value="1"/>
</dbReference>
<dbReference type="NCBIfam" id="TIGR00086">
    <property type="entry name" value="smpB"/>
    <property type="match status" value="1"/>
</dbReference>
<dbReference type="PANTHER" id="PTHR30308:SF2">
    <property type="entry name" value="SSRA-BINDING PROTEIN"/>
    <property type="match status" value="1"/>
</dbReference>
<dbReference type="PANTHER" id="PTHR30308">
    <property type="entry name" value="TMRNA-BINDING COMPONENT OF TRANS-TRANSLATION TAGGING COMPLEX"/>
    <property type="match status" value="1"/>
</dbReference>
<dbReference type="Pfam" id="PF01668">
    <property type="entry name" value="SmpB"/>
    <property type="match status" value="1"/>
</dbReference>
<dbReference type="SUPFAM" id="SSF74982">
    <property type="entry name" value="Small protein B (SmpB)"/>
    <property type="match status" value="1"/>
</dbReference>
<dbReference type="PROSITE" id="PS01317">
    <property type="entry name" value="SSRP"/>
    <property type="match status" value="1"/>
</dbReference>
<protein>
    <recommendedName>
        <fullName evidence="1">SsrA-binding protein</fullName>
    </recommendedName>
    <alternativeName>
        <fullName evidence="1">Small protein B</fullName>
    </alternativeName>
</protein>
<keyword id="KW-0963">Cytoplasm</keyword>
<keyword id="KW-0694">RNA-binding</keyword>
<name>SSRP_XYLFM</name>
<sequence>MNNKHPKNKAKSTTTPKTIALNKRARHEYHLIERHEAGLELQGWEVKAIRAGRANLGDGYAYVRDGEIFLIGAQITPLIQASTHVVANDRRTRKLLLHRRQIDTLIGRVQREGFTLVPTAMYWSKNRVKMEIALAKGKQAHDKRHAEKEREWQRDKQRIMRAHNRNA</sequence>
<feature type="chain" id="PRO_1000090204" description="SsrA-binding protein">
    <location>
        <begin position="1"/>
        <end position="167"/>
    </location>
</feature>
<feature type="region of interest" description="Disordered" evidence="2">
    <location>
        <begin position="139"/>
        <end position="167"/>
    </location>
</feature>
<feature type="compositionally biased region" description="Basic and acidic residues" evidence="2">
    <location>
        <begin position="144"/>
        <end position="158"/>
    </location>
</feature>
<accession>B0U3K6</accession>
<reference key="1">
    <citation type="journal article" date="2010" name="J. Bacteriol.">
        <title>Whole genome sequences of two Xylella fastidiosa strains (M12 and M23) causing almond leaf scorch disease in California.</title>
        <authorList>
            <person name="Chen J."/>
            <person name="Xie G."/>
            <person name="Han S."/>
            <person name="Chertkov O."/>
            <person name="Sims D."/>
            <person name="Civerolo E.L."/>
        </authorList>
    </citation>
    <scope>NUCLEOTIDE SEQUENCE [LARGE SCALE GENOMIC DNA]</scope>
    <source>
        <strain>M12</strain>
    </source>
</reference>
<evidence type="ECO:0000255" key="1">
    <source>
        <dbReference type="HAMAP-Rule" id="MF_00023"/>
    </source>
</evidence>
<evidence type="ECO:0000256" key="2">
    <source>
        <dbReference type="SAM" id="MobiDB-lite"/>
    </source>
</evidence>
<proteinExistence type="inferred from homology"/>